<feature type="chain" id="PRO_0000422490" description="Genome polyprotein" evidence="1">
    <location>
        <begin position="1"/>
        <end position="2333"/>
    </location>
</feature>
<feature type="chain" id="PRO_0000422491" description="Leader protease" evidence="1">
    <location>
        <begin position="1"/>
        <end position="201"/>
    </location>
</feature>
<feature type="chain" id="PRO_0000422492" description="Capsid protein VP0" evidence="9">
    <location>
        <begin position="202"/>
        <end position="504"/>
    </location>
</feature>
<feature type="chain" id="PRO_0000422493" description="Capsid protein VP4" evidence="9">
    <location>
        <begin position="202"/>
        <end position="286"/>
    </location>
</feature>
<feature type="chain" id="PRO_0000422494" description="Capsid protein VP2" evidence="9">
    <location>
        <begin position="287"/>
        <end position="504"/>
    </location>
</feature>
<feature type="chain" id="PRO_0000422495" description="Capsid protein VP3" evidence="9">
    <location>
        <begin position="505"/>
        <end position="725"/>
    </location>
</feature>
<feature type="chain" id="PRO_0000039867" description="Capsid protein VP1" evidence="1">
    <location>
        <begin position="726"/>
        <end position="936"/>
    </location>
</feature>
<feature type="chain" id="PRO_0000039868" description="Protein 2A" evidence="9">
    <location>
        <begin position="937"/>
        <end position="954"/>
    </location>
</feature>
<feature type="chain" id="PRO_0000422496" description="Protein 2B" evidence="9">
    <location>
        <begin position="955"/>
        <end position="1108"/>
    </location>
</feature>
<feature type="chain" id="PRO_0000422497" description="Protein 2C" evidence="9">
    <location>
        <begin position="1109"/>
        <end position="1426"/>
    </location>
</feature>
<feature type="chain" id="PRO_0000422498" description="Protein 3A" evidence="9">
    <location>
        <begin position="1427"/>
        <end position="1579"/>
    </location>
</feature>
<feature type="chain" id="PRO_0000422499" description="Protein 3B-1" evidence="9">
    <location>
        <begin position="1580"/>
        <end position="1602"/>
    </location>
</feature>
<feature type="chain" id="PRO_0000422500" description="Protein 3B-2" evidence="9">
    <location>
        <begin position="1603"/>
        <end position="1626"/>
    </location>
</feature>
<feature type="chain" id="PRO_0000422501" description="Protein 3B-3" evidence="9">
    <location>
        <begin position="1627"/>
        <end position="1650"/>
    </location>
</feature>
<feature type="chain" id="PRO_0000422502" description="Protease 3C" evidence="9">
    <location>
        <begin position="1651"/>
        <end position="1863"/>
    </location>
</feature>
<feature type="chain" id="PRO_0000422503" description="RNA-directed RNA polymerase 3D-POL" evidence="9">
    <location>
        <begin position="1864"/>
        <end position="2333"/>
    </location>
</feature>
<feature type="topological domain" description="Cytoplasmic" evidence="9">
    <location>
        <begin position="1"/>
        <end position="1481"/>
    </location>
</feature>
<feature type="intramembrane region" evidence="9">
    <location>
        <begin position="1482"/>
        <end position="1502"/>
    </location>
</feature>
<feature type="topological domain" description="Cytoplasmic" evidence="9">
    <location>
        <begin position="1503"/>
        <end position="2333"/>
    </location>
</feature>
<feature type="domain" description="Peptidase C28">
    <location>
        <begin position="1"/>
        <end position="201"/>
    </location>
</feature>
<feature type="domain" description="SF3 helicase" evidence="11">
    <location>
        <begin position="1190"/>
        <end position="1354"/>
    </location>
</feature>
<feature type="domain" description="Peptidase C3" evidence="12">
    <location>
        <begin position="1653"/>
        <end position="1849"/>
    </location>
</feature>
<feature type="domain" description="RdRp catalytic" evidence="10">
    <location>
        <begin position="2097"/>
        <end position="2215"/>
    </location>
</feature>
<feature type="region of interest" description="Disordered" evidence="13">
    <location>
        <begin position="197"/>
        <end position="218"/>
    </location>
</feature>
<feature type="region of interest" description="Disordered" evidence="13">
    <location>
        <begin position="238"/>
        <end position="265"/>
    </location>
</feature>
<feature type="region of interest" description="Antigenic epitope" evidence="2">
    <location>
        <begin position="789"/>
        <end position="797"/>
    </location>
</feature>
<feature type="region of interest" description="Disordered" evidence="13">
    <location>
        <begin position="1530"/>
        <end position="1585"/>
    </location>
</feature>
<feature type="short sequence motif" description="Cell attachment site" evidence="4">
    <location>
        <begin position="869"/>
        <end position="871"/>
    </location>
</feature>
<feature type="short sequence motif" description="Nuclear localization signal" evidence="7">
    <location>
        <begin position="1879"/>
        <end position="1887"/>
    </location>
</feature>
<feature type="compositionally biased region" description="Polar residues" evidence="13">
    <location>
        <begin position="204"/>
        <end position="218"/>
    </location>
</feature>
<feature type="compositionally biased region" description="Polar residues" evidence="13">
    <location>
        <begin position="238"/>
        <end position="251"/>
    </location>
</feature>
<feature type="compositionally biased region" description="Low complexity" evidence="13">
    <location>
        <begin position="252"/>
        <end position="265"/>
    </location>
</feature>
<feature type="compositionally biased region" description="Basic and acidic residues" evidence="13">
    <location>
        <begin position="1530"/>
        <end position="1539"/>
    </location>
</feature>
<feature type="compositionally biased region" description="Basic and acidic residues" evidence="13">
    <location>
        <begin position="1550"/>
        <end position="1564"/>
    </location>
</feature>
<feature type="compositionally biased region" description="Low complexity" evidence="13">
    <location>
        <begin position="1567"/>
        <end position="1579"/>
    </location>
</feature>
<feature type="active site" description="For leader protease activity" evidence="1">
    <location>
        <position position="51"/>
    </location>
</feature>
<feature type="active site" description="For leader protease activity" evidence="1">
    <location>
        <position position="148"/>
    </location>
</feature>
<feature type="active site" description="For leader protease activity" evidence="1">
    <location>
        <position position="163"/>
    </location>
</feature>
<feature type="active site" description="For protease 3C activity; Proton donor/acceptor" evidence="12">
    <location>
        <position position="1696"/>
    </location>
</feature>
<feature type="active site" description="For protease 3C activity" evidence="12">
    <location>
        <position position="1734"/>
    </location>
</feature>
<feature type="active site" description="For protease 3C activity" evidence="12">
    <location>
        <position position="1813"/>
    </location>
</feature>
<feature type="active site" description="For RdRp activity" evidence="8">
    <location>
        <position position="2201"/>
    </location>
</feature>
<feature type="binding site" evidence="11">
    <location>
        <begin position="1218"/>
        <end position="1225"/>
    </location>
    <ligand>
        <name>ATP</name>
        <dbReference type="ChEBI" id="CHEBI:30616"/>
    </ligand>
</feature>
<feature type="site" description="Cleavage; by leader protease" evidence="9">
    <location>
        <begin position="201"/>
        <end position="202"/>
    </location>
</feature>
<feature type="site" description="Cleavage" evidence="9">
    <location>
        <begin position="286"/>
        <end position="287"/>
    </location>
</feature>
<feature type="site" description="Cleavage; by picornain 3C" evidence="9">
    <location>
        <begin position="504"/>
        <end position="505"/>
    </location>
</feature>
<feature type="site" description="Cleavage; by picornain 3C" evidence="9">
    <location>
        <begin position="725"/>
        <end position="726"/>
    </location>
</feature>
<feature type="site" description="Cleavage; by picornain 3C" evidence="9">
    <location>
        <begin position="936"/>
        <end position="937"/>
    </location>
</feature>
<feature type="site" description="Cleavage; by ribosomal skip" evidence="9">
    <location>
        <begin position="954"/>
        <end position="955"/>
    </location>
</feature>
<feature type="site" description="Cleavage; by picornain 3C" evidence="9">
    <location>
        <begin position="1108"/>
        <end position="1109"/>
    </location>
</feature>
<feature type="site" description="Cleavage; by picornain 3C" evidence="9">
    <location>
        <begin position="1426"/>
        <end position="1427"/>
    </location>
</feature>
<feature type="site" description="Cleavage; by picornain 3C" evidence="9">
    <location>
        <begin position="1579"/>
        <end position="1580"/>
    </location>
</feature>
<feature type="site" description="Cleavage; by picornain 3C" evidence="9">
    <location>
        <begin position="1602"/>
        <end position="1603"/>
    </location>
</feature>
<feature type="site" description="Cleavage; by picornain 3C" evidence="9">
    <location>
        <begin position="1626"/>
        <end position="1627"/>
    </location>
</feature>
<feature type="site" description="Cleavage; by picornain 3C" evidence="9">
    <location>
        <begin position="1650"/>
        <end position="1651"/>
    </location>
</feature>
<feature type="site" description="Cleavage; by picornain 3C" evidence="9">
    <location>
        <begin position="1863"/>
        <end position="1864"/>
    </location>
</feature>
<feature type="modified residue" description="O-(5'-phospho-RNA)-tyrosine" evidence="4">
    <location>
        <position position="1582"/>
    </location>
</feature>
<feature type="modified residue" description="O-(5'-phospho-RNA)-tyrosine" evidence="4">
    <location>
        <position position="1605"/>
    </location>
</feature>
<feature type="modified residue" description="O-(5'-phospho-RNA)-tyrosine" evidence="4">
    <location>
        <position position="1629"/>
    </location>
</feature>
<feature type="lipid moiety-binding region" description="N-myristoyl glycine; by host" evidence="7">
    <location>
        <position position="202"/>
    </location>
</feature>
<feature type="disulfide bond" description="Interchain; in VP3 dimer" evidence="4">
    <location>
        <position position="511"/>
    </location>
</feature>
<feature type="splice variant" id="VSP_046530" description="In isoform Lb." evidence="14">
    <location>
        <begin position="1"/>
        <end position="28"/>
    </location>
</feature>
<feature type="sequence variant">
    <original>H</original>
    <variation>T</variation>
    <location>
        <position position="12"/>
    </location>
</feature>
<feature type="sequence variant">
    <original>E</original>
    <variation>D</variation>
    <location>
        <position position="165"/>
    </location>
</feature>
<feature type="sequence variant">
    <original>G</original>
    <variation>S</variation>
    <location>
        <position position="220"/>
    </location>
</feature>
<feature type="sequence variant">
    <original>T</original>
    <variation>M</variation>
    <location>
        <position position="293"/>
    </location>
</feature>
<feature type="sequence variant">
    <original>A</original>
    <variation>T</variation>
    <location>
        <position position="728"/>
    </location>
</feature>
<feature type="sequence variant">
    <original>A</original>
    <variation>T</variation>
    <location>
        <position position="794"/>
    </location>
</feature>
<feature type="sequence variant">
    <original>L</original>
    <variation>P</variation>
    <location>
        <position position="851"/>
    </location>
</feature>
<comment type="function">
    <molecule>Leader protease</molecule>
    <text evidence="4 6">Autocatalytically cleaves itself from the polyprotein at the L/VP0 junction. Also cleaves the host translation initiation factors EIF4G1 and EIF4G3, in order to shut off the capped cellular mRNA transcription. Plays a role in counteracting host innate antiviral response using diverse mechanisms. Possesses a deubiquitinase activity acting on both 'Lys-48' and 'Lys-63'-linked polyubiquitin chains. In turn, inhibits the ubiquitination and subsequent activation of key signaling molecules of type I IFN response such as host RIGI, TBK1, TRAF3 and TRAF6. Inhibits host NF-kappa-B activity by inducing a decrease in RELA mRNA levels. Cleaves a peptide bond in the C-terminus of host ISG15, resulting in the damaging of this modifier that can no longer be attached to target proteins. Also cleaves host G3BP1 and G3BP2 in order to inhibit cytoplasmic stress granules assembly.</text>
</comment>
<comment type="function">
    <molecule>Capsid protein VP4</molecule>
    <text evidence="3">Lies on the inner surface of the capsid shell. After binding to the host receptor, the capsid undergoes conformational changes. Capsid protein VP4 is released, capsid protein VP1 N-terminus is externalized, and together, they shape a pore in the host membrane through which the viral genome is translocated into the host cell cytoplasm. After genome has been released, the channel shrinks.</text>
</comment>
<comment type="function">
    <molecule>Capsid protein VP2</molecule>
    <text evidence="4 5">Forms an icosahedral capsid of pseudo T=3 symmetry with capsid proteins VP1 and VP3. The capsid is composed of 60 copies of each capsid protein organized in the form of twelve pentamers and encloses the viral positive strand RNA genome (By similarity). Upon acidifcation in the endosome, dissociates into pentamers (By similarity).</text>
</comment>
<comment type="function">
    <molecule>Capsid protein VP3</molecule>
    <text evidence="4 5">Forms an icosahedral capsid of pseudo T=3 symmetry with capsid proteins VP0 and VP3. The capsid is composed of 60 copies of each capsid protein organized in the form of twelve pentamers and encloses the viral positive strand RNA genome (By similarity). Upon acidifcation in the endosome, dissociates into pentamers (By similarity).</text>
</comment>
<comment type="function">
    <molecule>Capsid protein VP1</molecule>
    <text evidence="4 5">Forms an icosahedral capsid of pseudo T=3 symmetry with capsid proteins VP2 and VP3. The capsid is composed of 60 copies of each capsid protein organized in the form of twelve pentamers and encloses the viral positive strand RNA genome. Mediates cell entry by attachment to an integrin receptor, usually host ITGAV/ITGB6. In addition, targets host MAVS to suppress type I IFN pathway (By similarity). Upon acidifcation in the endosome, dissociates into pentamers (By similarity).</text>
</comment>
<comment type="function">
    <molecule>Protein 2A</molecule>
    <text evidence="4">Mediates self-processing of the polyprotein by a translational effect termed 'ribosome skipping'. Mechanistically, 2A-mediated cleavage occurs between the C-terminal glycine and the proline of the downstream protein 2B. In the case of foot-and-mouth disease virus, the 2A oligopeptide is post-translationally 'trimmed' from the C-terminus of the upstream protein 1D by 3C proteinase.</text>
</comment>
<comment type="function">
    <molecule>Protein 2B</molecule>
    <text evidence="4">Plays an essential role in the virus replication cycle by acting as a viroporin. Creates a pore in the host endoplasmic reticulum and as a consequence releases Ca2+ in the cytoplasm of infected cell. In turn, high levels of cytoplasmic calcium may trigger membrane trafficking and transport of viral ER-associated proteins to viroplasms, sites of viral genome replication.</text>
</comment>
<comment type="function">
    <molecule>Protein 2C</molecule>
    <text evidence="4">Associates with and induces structural rearrangements of intracellular membranes. Triggers host autophagy by interacting with host BECN1 and thereby promotes viral replication. Participates in viral replication and interacts with host DHX9. Displays RNA-binding, nucleotide binding and NTPase activities. May play a role in virion morphogenesis and viral RNA encapsidation by interacting with the capsid protein VP3.</text>
</comment>
<comment type="function">
    <molecule>Protein 3A</molecule>
    <text evidence="4">Plays important roles in virus replication, virulence and host range. Cooperates with host DDX56 to inhibit IRF3 nuclear translocation and subsequent type I interferon production.</text>
</comment>
<comment type="function">
    <molecule>Protein 3B-1</molecule>
    <text evidence="4">Covalently linked to the 5'-end of both the positive-strand and negative-strand genomic RNAs. Acts as a genome-linked replication primer.</text>
</comment>
<comment type="function">
    <molecule>Protein 3B-2</molecule>
    <text evidence="4">Covalently linked to the 5'-end of both the positive-strand and negative-strand genomic RNAs. Acts as a genome-linked replication primer.</text>
</comment>
<comment type="function">
    <molecule>Protein 3B-3</molecule>
    <text evidence="4">Covalently linked to the 5'-end of both the positive-strand and negative-strand genomic RNAs. Acts as a genome-linked replication primer.</text>
</comment>
<comment type="function">
    <molecule>Protease 3C</molecule>
    <text evidence="4">Cysteine protease that generates mature viral proteins from the precursor polyprotein. In addition to its proteolytic activity, binds to viral RNA and thus influences viral genome replication. RNA and substrate bind cooperatively to the protease.</text>
</comment>
<comment type="function">
    <text evidence="4">RNA-directed RNA polymerase 3D-POL replicates genomic and antigenomic RNA by recognizing replications specific signals. Covalently attaches UMP to a tyrosine of VPg, which is used to prime RNA synthesis. The positive stranded RNA genome is first replicated at virus induced membranous vesicles, creating a dsRNA genomic replication form. This dsRNA is then used as template to synthesize positive stranded RNA genomes. ss(+)RNA genomes are either translated, replicated or encapsidated.</text>
</comment>
<comment type="catalytic activity">
    <molecule>Leader protease</molecule>
    <reaction>
        <text>Autocatalytically cleaves itself from the polyprotein of the foot-and-mouth disease virus by hydrolysis of a Lys-|-Gly bond, but then cleaves host cell initiation factor eIF-4G at bonds -Gly-|-Arg- and -Lys-|-Arg-.</text>
        <dbReference type="EC" id="3.4.22.46"/>
    </reaction>
</comment>
<comment type="catalytic activity">
    <molecule>Protein 2C</molecule>
    <reaction evidence="4">
        <text>a ribonucleoside 5'-triphosphate + H2O = a ribonucleoside 5'-diphosphate + phosphate + H(+)</text>
        <dbReference type="Rhea" id="RHEA:23680"/>
        <dbReference type="ChEBI" id="CHEBI:15377"/>
        <dbReference type="ChEBI" id="CHEBI:15378"/>
        <dbReference type="ChEBI" id="CHEBI:43474"/>
        <dbReference type="ChEBI" id="CHEBI:57930"/>
        <dbReference type="ChEBI" id="CHEBI:61557"/>
        <dbReference type="EC" id="3.6.1.15"/>
    </reaction>
</comment>
<comment type="catalytic activity">
    <molecule>RNA-directed RNA polymerase 3D-POL</molecule>
    <reaction evidence="10">
        <text>RNA(n) + a ribonucleoside 5'-triphosphate = RNA(n+1) + diphosphate</text>
        <dbReference type="Rhea" id="RHEA:21248"/>
        <dbReference type="Rhea" id="RHEA-COMP:14527"/>
        <dbReference type="Rhea" id="RHEA-COMP:17342"/>
        <dbReference type="ChEBI" id="CHEBI:33019"/>
        <dbReference type="ChEBI" id="CHEBI:61557"/>
        <dbReference type="ChEBI" id="CHEBI:140395"/>
        <dbReference type="EC" id="2.7.7.48"/>
    </reaction>
</comment>
<comment type="catalytic activity">
    <molecule>Protease 3C</molecule>
    <reaction evidence="12">
        <text>Selective cleavage of Gln-|-Gly bond in the poliovirus polyprotein. In other picornavirus reactions Glu may be substituted for Gln, and Ser or Thr for Gly.</text>
        <dbReference type="EC" id="3.4.22.28"/>
    </reaction>
</comment>
<comment type="subunit">
    <molecule>Leader protease</molecule>
    <text evidence="4">Interacts with host ISG15.</text>
</comment>
<comment type="subunit">
    <molecule>Capsid protein VP1</molecule>
    <text evidence="4">Interacts (via R-G-D motif) with host ITGAV/ITGB6 (By similarity). Interacts with host MAVS; this interaction inhibits binding of host TRAF3 to MAVS, thereby suppressing interferon-mediated responses (By similarity).</text>
</comment>
<comment type="subunit">
    <molecule>Protein 2B</molecule>
    <text evidence="4">Forms homooligomers.</text>
</comment>
<comment type="subunit">
    <molecule>Protein 2C</molecule>
    <text evidence="4">Homohexamer. Interacts with host VIM. Interacts with host BECN1.</text>
</comment>
<comment type="subunit">
    <molecule>Protein 3A</molecule>
    <text evidence="4">Interacts with host DCTN3.</text>
</comment>
<comment type="subunit">
    <molecule>Protein 3B-1</molecule>
    <text evidence="7">Interacts with RNA-dependent RNA polymerase; this interaction allows 3B-1 to binds 2 polymerases and act as a primer. It also allows the recruitment of the RNA-dependent RNA polymerase to host membranes.</text>
</comment>
<comment type="subunit">
    <molecule>Protein 3B-2</molecule>
    <text evidence="7">Interacts with RNA-dependent RNA polymerase; this interaction allows 3B-2 to act as a primer.</text>
</comment>
<comment type="subunit">
    <molecule>Protein 3B-3</molecule>
    <text evidence="7">Interacts with RNA-dependent RNA polymerase; this interaction allows 3B-3 to act as a primer.</text>
</comment>
<comment type="subunit">
    <molecule>RNA-directed RNA polymerase 3D-POL</molecule>
    <text evidence="7">Interacts with 3B-1; this interaction allows 3B-1 to binds 2 polymerases and act as a primer. It also allows the recruitment of the RNA-dependent RNA polymerase to host membranes (By similarity). Interacts with 3B-2; this interaction allows 3B-2 to act as a primer (By similarity). Interacts with 3B-3; this interaction allows 3B-3 to act as a primer (By similarity).</text>
</comment>
<comment type="subcellular location">
    <molecule>Leader protease</molecule>
    <subcellularLocation>
        <location evidence="4">Host nucleus</location>
    </subcellularLocation>
    <subcellularLocation>
        <location evidence="4">Host cytoplasm</location>
    </subcellularLocation>
</comment>
<comment type="subcellular location">
    <molecule>Capsid protein VP2</molecule>
    <subcellularLocation>
        <location evidence="4">Virion</location>
    </subcellularLocation>
    <subcellularLocation>
        <location evidence="14">Host cytoplasm</location>
    </subcellularLocation>
</comment>
<comment type="subcellular location">
    <molecule>Capsid protein VP3</molecule>
    <subcellularLocation>
        <location evidence="4">Virion</location>
    </subcellularLocation>
    <subcellularLocation>
        <location evidence="14">Host cytoplasm</location>
    </subcellularLocation>
</comment>
<comment type="subcellular location">
    <molecule>Capsid protein VP1</molecule>
    <subcellularLocation>
        <location evidence="4">Virion</location>
    </subcellularLocation>
    <subcellularLocation>
        <location evidence="14">Host cytoplasm</location>
    </subcellularLocation>
</comment>
<comment type="subcellular location">
    <molecule>Protein 2B</molecule>
    <subcellularLocation>
        <location evidence="4">Host endoplasmic reticulum membrane</location>
    </subcellularLocation>
</comment>
<comment type="subcellular location">
    <molecule>Protein 2C</molecule>
    <subcellularLocation>
        <location evidence="14">Host cytoplasmic vesicle membrane</location>
        <topology evidence="14">Peripheral membrane protein</topology>
        <orientation evidence="14">Cytoplasmic side</orientation>
    </subcellularLocation>
    <text evidence="1">Probably localizes to the surface of intracellular membrane vesicles that are induced after virus infection as the site for viral RNA replication. These vesicles are derived from the endoplasmic reticulum (By similarity).</text>
</comment>
<comment type="subcellular location">
    <molecule>Protein 3A</molecule>
    <subcellularLocation>
        <location evidence="14">Host cytoplasmic vesicle membrane</location>
        <topology evidence="14">Peripheral membrane protein</topology>
        <orientation evidence="14">Cytoplasmic side</orientation>
    </subcellularLocation>
    <text evidence="1">Probably localizes to the surface of intracellular membrane vesicles that are induced after virus infection as the site for viral RNA replication. These vesicles are derived from the endoplasmic reticulum (By similarity).</text>
</comment>
<comment type="subcellular location">
    <molecule>Protein 3B-1</molecule>
    <subcellularLocation>
        <location evidence="14">Virion</location>
    </subcellularLocation>
</comment>
<comment type="subcellular location">
    <molecule>Protein 3B-2</molecule>
    <subcellularLocation>
        <location evidence="14">Virion</location>
    </subcellularLocation>
</comment>
<comment type="subcellular location">
    <molecule>Protein 3B-3</molecule>
    <subcellularLocation>
        <location evidence="14">Virion</location>
    </subcellularLocation>
</comment>
<comment type="subcellular location">
    <molecule>Protease 3C</molecule>
    <subcellularLocation>
        <location evidence="14">Host cytoplasm</location>
    </subcellularLocation>
</comment>
<comment type="subcellular location">
    <molecule>RNA-directed RNA polymerase 3D-POL</molecule>
    <subcellularLocation>
        <location evidence="14">Host cytoplasmic vesicle membrane</location>
        <topology evidence="14">Peripheral membrane protein</topology>
        <orientation evidence="14">Cytoplasmic side</orientation>
    </subcellularLocation>
    <text evidence="1">Probably localizes to the surface of intracellular membrane vesicles that are induced after virus infection as the site for viral RNA replication. These vesicles are derived from the endoplasmic reticulum (By similarity).</text>
</comment>
<comment type="alternative products">
    <event type="alternative initiation"/>
    <isoform>
        <id>P03309-1</id>
        <name>Lab</name>
        <sequence type="displayed"/>
    </isoform>
    <isoform>
        <id>P03309-2</id>
        <name>Lb</name>
        <sequence type="described" ref="VSP_046530"/>
    </isoform>
</comment>
<comment type="PTM">
    <molecule>Leader protease</molecule>
    <text evidence="4">Removes six residues from its own C-terminus, generating sLb(pro).</text>
</comment>
<comment type="PTM">
    <molecule>Genome polyprotein</molecule>
    <text evidence="4">Specific enzymatic cleavages in vivo by the viral proteases yield a variety of precursors and mature proteins. The polyprotein seems to be cotranslationally cleaved at the 2A/2B junction by a ribosomal skip from one codon to the next without formation of a peptide bond. This process would release the L-P1-2A peptide from the translational complex.</text>
</comment>
<comment type="PTM">
    <molecule>Capsid protein VP0</molecule>
    <text evidence="4">During virion maturation, immature virions are rendered infectious following cleavage of VP0 into VP4 and VP2. This maturation seems to be an autocatalytic event triggered by the presence of RNA in the capsid and is followed by a conformational change of the particle.</text>
</comment>
<comment type="PTM">
    <molecule>Capsid protein VP4</molecule>
    <text evidence="7">Myristoylation is required during RNA encapsidation and formation of the mature virus particle.</text>
</comment>
<comment type="PTM">
    <molecule>Protein 3B-1</molecule>
    <text evidence="4">Uridylylated by the polymerase and covalently linked to the 5'-end of genomic RNA. These uridylylated forms act as a nucleotide-peptide primer for the polymerase.</text>
</comment>
<comment type="PTM">
    <molecule>Protein 3B-2</molecule>
    <text evidence="4">Uridylylated by the polymerase and covalently linked to the 5'-end of genomic RNA. These uridylylated forms act as a nucleotide-peptide primer for the polymerase.</text>
</comment>
<comment type="PTM">
    <molecule>Protein 3B-3</molecule>
    <text evidence="4">Uridylylated by the polymerase and covalently linked to the 5'-end of genomic RNA. These uridylylated forms act as a nucleotide-peptide primer for the polymerase.</text>
</comment>
<comment type="miscellaneous">
    <molecule>Capsid protein VP1</molecule>
    <text evidence="14">Contains the main antigenic determinants of the virion; therefore, changes in its sequence must be responsible for the high antigenic variability of the virus.</text>
</comment>
<comment type="miscellaneous">
    <text evidence="1">The capsid protein VP1 contains the main antigenic determinants of the virion; therefore, changes in its sequence must be responsible for the high antigenic variability of the virus.</text>
</comment>
<comment type="similarity">
    <text evidence="14">Belongs to the picornaviruses polyprotein family.</text>
</comment>
<keyword id="KW-0002">3D-structure</keyword>
<keyword id="KW-0024">Alternative initiation</keyword>
<keyword id="KW-0067">ATP-binding</keyword>
<keyword id="KW-0167">Capsid protein</keyword>
<keyword id="KW-1167">Clathrin- and caveolin-independent endocytosis of virus by host</keyword>
<keyword id="KW-1165">Clathrin-mediated endocytosis of virus by host</keyword>
<keyword id="KW-0191">Covalent protein-RNA linkage</keyword>
<keyword id="KW-1015">Disulfide bond</keyword>
<keyword id="KW-0347">Helicase</keyword>
<keyword id="KW-1035">Host cytoplasm</keyword>
<keyword id="KW-1036">Host cytoplasmic vesicle</keyword>
<keyword id="KW-1038">Host endoplasmic reticulum</keyword>
<keyword id="KW-1043">Host membrane</keyword>
<keyword id="KW-1048">Host nucleus</keyword>
<keyword id="KW-0945">Host-virus interaction</keyword>
<keyword id="KW-0378">Hydrolase</keyword>
<keyword id="KW-0407">Ion channel</keyword>
<keyword id="KW-0406">Ion transport</keyword>
<keyword id="KW-0449">Lipoprotein</keyword>
<keyword id="KW-0472">Membrane</keyword>
<keyword id="KW-1122">Modulation of host chromatin by virus</keyword>
<keyword id="KW-0519">Myristate</keyword>
<keyword id="KW-0547">Nucleotide-binding</keyword>
<keyword id="KW-0548">Nucleotidyltransferase</keyword>
<keyword id="KW-0597">Phosphoprotein</keyword>
<keyword id="KW-0645">Protease</keyword>
<keyword id="KW-0694">RNA-binding</keyword>
<keyword id="KW-0696">RNA-directed RNA polymerase</keyword>
<keyword id="KW-1143">T=pseudo3 icosahedral capsid protein</keyword>
<keyword id="KW-0788">Thiol protease</keyword>
<keyword id="KW-0808">Transferase</keyword>
<keyword id="KW-0810">Translation regulation</keyword>
<keyword id="KW-0813">Transport</keyword>
<keyword id="KW-1161">Viral attachment to host cell</keyword>
<keyword id="KW-1182">Viral ion channel</keyword>
<keyword id="KW-1162">Viral penetration into host cytoplasm</keyword>
<keyword id="KW-0693">Viral RNA replication</keyword>
<keyword id="KW-0946">Virion</keyword>
<keyword id="KW-1164">Virus endocytosis by host</keyword>
<keyword id="KW-1160">Virus entry into host cell</keyword>
<name>POLG_FMDVC</name>
<organismHost>
    <name type="scientific">Bos taurus</name>
    <name type="common">Bovine</name>
    <dbReference type="NCBI Taxonomy" id="9913"/>
</organismHost>
<organismHost>
    <name type="scientific">Capra hircus</name>
    <name type="common">Goat</name>
    <dbReference type="NCBI Taxonomy" id="9925"/>
</organismHost>
<organismHost>
    <name type="scientific">Cervidae</name>
    <name type="common">Deer</name>
    <dbReference type="NCBI Taxonomy" id="9850"/>
</organismHost>
<organismHost>
    <name type="scientific">Erinaceidae</name>
    <name type="common">hedgehogs</name>
    <dbReference type="NCBI Taxonomy" id="9363"/>
</organismHost>
<organismHost>
    <name type="scientific">Loxodonta africana</name>
    <name type="common">African elephant</name>
    <dbReference type="NCBI Taxonomy" id="9785"/>
</organismHost>
<organismHost>
    <name type="scientific">Ovis aries</name>
    <name type="common">Sheep</name>
    <dbReference type="NCBI Taxonomy" id="9940"/>
</organismHost>
<organismHost>
    <name type="scientific">Rattus norvegicus</name>
    <name type="common">Rat</name>
    <dbReference type="NCBI Taxonomy" id="10116"/>
</organismHost>
<organismHost>
    <name type="scientific">Sus scrofa</name>
    <name type="common">Pig</name>
    <dbReference type="NCBI Taxonomy" id="9823"/>
</organismHost>
<accession>P03309</accession>
<accession>I0AZ17</accession>
<accession>Q6PN18</accession>
<accession>Q9Q2N6</accession>
<dbReference type="EC" id="3.4.22.46" evidence="4"/>
<dbReference type="EC" id="3.6.1.15" evidence="4"/>
<dbReference type="EC" id="3.4.22.28"/>
<dbReference type="EC" id="2.7.7.48" evidence="4"/>
<dbReference type="EMBL" id="AJ251476">
    <property type="protein sequence ID" value="CAB62583.1"/>
    <property type="molecule type" value="Genomic_RNA"/>
</dbReference>
<dbReference type="EMBL" id="AY593768">
    <property type="protein sequence ID" value="AAT01711.1"/>
    <property type="molecule type" value="Genomic_RNA"/>
</dbReference>
<dbReference type="EMBL" id="J02183">
    <property type="protein sequence ID" value="AAA42596.1"/>
    <property type="molecule type" value="Genomic_RNA"/>
</dbReference>
<dbReference type="EMBL" id="JQ082960">
    <property type="protein sequence ID" value="AFH54505.1"/>
    <property type="molecule type" value="Genomic_RNA"/>
</dbReference>
<dbReference type="PIR" id="A03911">
    <property type="entry name" value="A03911"/>
</dbReference>
<dbReference type="PDB" id="7FEI">
    <property type="method" value="EM"/>
    <property type="resolution" value="3.91 A"/>
    <property type="chains" value="4=202-286"/>
</dbReference>
<dbReference type="PDBsum" id="7FEI"/>
<dbReference type="EMDB" id="EMD-31555"/>
<dbReference type="SMR" id="P03309"/>
<dbReference type="IntAct" id="P03309">
    <property type="interactions" value="1"/>
</dbReference>
<dbReference type="MEROPS" id="C03.008"/>
<dbReference type="MEROPS" id="C28.001"/>
<dbReference type="ABCD" id="P03309">
    <property type="antibodies" value="5 sequenced antibodies"/>
</dbReference>
<dbReference type="Proteomes" id="UP000012667">
    <property type="component" value="Genome"/>
</dbReference>
<dbReference type="GO" id="GO:0044162">
    <property type="term" value="C:host cell cytoplasmic vesicle membrane"/>
    <property type="evidence" value="ECO:0007669"/>
    <property type="project" value="UniProtKB-SubCell"/>
</dbReference>
<dbReference type="GO" id="GO:0044167">
    <property type="term" value="C:host cell endoplasmic reticulum membrane"/>
    <property type="evidence" value="ECO:0007669"/>
    <property type="project" value="UniProtKB-SubCell"/>
</dbReference>
<dbReference type="GO" id="GO:0042025">
    <property type="term" value="C:host cell nucleus"/>
    <property type="evidence" value="ECO:0007669"/>
    <property type="project" value="UniProtKB-SubCell"/>
</dbReference>
<dbReference type="GO" id="GO:0016020">
    <property type="term" value="C:membrane"/>
    <property type="evidence" value="ECO:0007669"/>
    <property type="project" value="UniProtKB-KW"/>
</dbReference>
<dbReference type="GO" id="GO:0039618">
    <property type="term" value="C:T=pseudo3 icosahedral viral capsid"/>
    <property type="evidence" value="ECO:0007669"/>
    <property type="project" value="UniProtKB-KW"/>
</dbReference>
<dbReference type="GO" id="GO:0005524">
    <property type="term" value="F:ATP binding"/>
    <property type="evidence" value="ECO:0007669"/>
    <property type="project" value="UniProtKB-KW"/>
</dbReference>
<dbReference type="GO" id="GO:0015267">
    <property type="term" value="F:channel activity"/>
    <property type="evidence" value="ECO:0007669"/>
    <property type="project" value="UniProtKB-KW"/>
</dbReference>
<dbReference type="GO" id="GO:0004197">
    <property type="term" value="F:cysteine-type endopeptidase activity"/>
    <property type="evidence" value="ECO:0007669"/>
    <property type="project" value="UniProtKB-EC"/>
</dbReference>
<dbReference type="GO" id="GO:0017111">
    <property type="term" value="F:ribonucleoside triphosphate phosphatase activity"/>
    <property type="evidence" value="ECO:0007669"/>
    <property type="project" value="UniProtKB-EC"/>
</dbReference>
<dbReference type="GO" id="GO:0003723">
    <property type="term" value="F:RNA binding"/>
    <property type="evidence" value="ECO:0007669"/>
    <property type="project" value="UniProtKB-KW"/>
</dbReference>
<dbReference type="GO" id="GO:0003724">
    <property type="term" value="F:RNA helicase activity"/>
    <property type="evidence" value="ECO:0007669"/>
    <property type="project" value="InterPro"/>
</dbReference>
<dbReference type="GO" id="GO:0003968">
    <property type="term" value="F:RNA-directed RNA polymerase activity"/>
    <property type="evidence" value="ECO:0007669"/>
    <property type="project" value="UniProtKB-KW"/>
</dbReference>
<dbReference type="GO" id="GO:0005198">
    <property type="term" value="F:structural molecule activity"/>
    <property type="evidence" value="ECO:0007669"/>
    <property type="project" value="InterPro"/>
</dbReference>
<dbReference type="GO" id="GO:0075512">
    <property type="term" value="P:clathrin-dependent endocytosis of virus by host cell"/>
    <property type="evidence" value="ECO:0007669"/>
    <property type="project" value="UniProtKB-KW"/>
</dbReference>
<dbReference type="GO" id="GO:0006351">
    <property type="term" value="P:DNA-templated transcription"/>
    <property type="evidence" value="ECO:0007669"/>
    <property type="project" value="InterPro"/>
</dbReference>
<dbReference type="GO" id="GO:0034220">
    <property type="term" value="P:monoatomic ion transmembrane transport"/>
    <property type="evidence" value="ECO:0007669"/>
    <property type="project" value="UniProtKB-KW"/>
</dbReference>
<dbReference type="GO" id="GO:0006508">
    <property type="term" value="P:proteolysis"/>
    <property type="evidence" value="ECO:0007669"/>
    <property type="project" value="UniProtKB-KW"/>
</dbReference>
<dbReference type="GO" id="GO:0006417">
    <property type="term" value="P:regulation of translation"/>
    <property type="evidence" value="ECO:0007669"/>
    <property type="project" value="UniProtKB-KW"/>
</dbReference>
<dbReference type="GO" id="GO:0039520">
    <property type="term" value="P:symbiont-mediated activation of host autophagy"/>
    <property type="evidence" value="ECO:0000250"/>
    <property type="project" value="UniProtKB"/>
</dbReference>
<dbReference type="GO" id="GO:0039525">
    <property type="term" value="P:symbiont-mediated perturbation of host chromatin organization"/>
    <property type="evidence" value="ECO:0007669"/>
    <property type="project" value="UniProtKB-KW"/>
</dbReference>
<dbReference type="GO" id="GO:0019082">
    <property type="term" value="P:viral protein processing"/>
    <property type="evidence" value="ECO:0007669"/>
    <property type="project" value="InterPro"/>
</dbReference>
<dbReference type="GO" id="GO:0039694">
    <property type="term" value="P:viral RNA genome replication"/>
    <property type="evidence" value="ECO:0007669"/>
    <property type="project" value="InterPro"/>
</dbReference>
<dbReference type="GO" id="GO:0019062">
    <property type="term" value="P:virion attachment to host cell"/>
    <property type="evidence" value="ECO:0007669"/>
    <property type="project" value="UniProtKB-KW"/>
</dbReference>
<dbReference type="CDD" id="cd23210">
    <property type="entry name" value="Aphthovirus_RdRp"/>
    <property type="match status" value="1"/>
</dbReference>
<dbReference type="CDD" id="cd00205">
    <property type="entry name" value="rhv_like"/>
    <property type="match status" value="3"/>
</dbReference>
<dbReference type="FunFam" id="1.20.960.20:FF:000002">
    <property type="entry name" value="Genome polyprotein"/>
    <property type="match status" value="1"/>
</dbReference>
<dbReference type="FunFam" id="2.40.10.10:FF:000108">
    <property type="entry name" value="Genome polyprotein"/>
    <property type="match status" value="1"/>
</dbReference>
<dbReference type="FunFam" id="2.60.120.20:FF:000005">
    <property type="entry name" value="Genome polyprotein"/>
    <property type="match status" value="1"/>
</dbReference>
<dbReference type="FunFam" id="2.60.120.20:FF:000006">
    <property type="entry name" value="Genome polyprotein"/>
    <property type="match status" value="1"/>
</dbReference>
<dbReference type="FunFam" id="2.60.120.20:FF:000012">
    <property type="entry name" value="Genome polyprotein"/>
    <property type="match status" value="1"/>
</dbReference>
<dbReference type="FunFam" id="3.30.70.270:FF:000031">
    <property type="entry name" value="Genome polyprotein"/>
    <property type="match status" value="1"/>
</dbReference>
<dbReference type="Gene3D" id="1.20.960.20">
    <property type="match status" value="1"/>
</dbReference>
<dbReference type="Gene3D" id="2.60.120.20">
    <property type="match status" value="3"/>
</dbReference>
<dbReference type="Gene3D" id="3.30.70.270">
    <property type="match status" value="2"/>
</dbReference>
<dbReference type="Gene3D" id="4.10.90.10">
    <property type="entry name" value="Capsid protein VP4 superfamily, Picornavirus"/>
    <property type="match status" value="1"/>
</dbReference>
<dbReference type="Gene3D" id="3.90.70.10">
    <property type="entry name" value="Cysteine proteinases"/>
    <property type="match status" value="1"/>
</dbReference>
<dbReference type="Gene3D" id="2.40.10.10">
    <property type="entry name" value="Trypsin-like serine proteases"/>
    <property type="match status" value="2"/>
</dbReference>
<dbReference type="InterPro" id="IPR015031">
    <property type="entry name" value="Capsid_VP4_Picornavir"/>
</dbReference>
<dbReference type="InterPro" id="IPR037080">
    <property type="entry name" value="Capsid_VP4_sf_Picornavirus"/>
</dbReference>
<dbReference type="InterPro" id="IPR043502">
    <property type="entry name" value="DNA/RNA_pol_sf"/>
</dbReference>
<dbReference type="InterPro" id="IPR004080">
    <property type="entry name" value="FMDV_VP1_coat"/>
</dbReference>
<dbReference type="InterPro" id="IPR004004">
    <property type="entry name" value="Helic/Pol/Pept_Calicivir-typ"/>
</dbReference>
<dbReference type="InterPro" id="IPR000605">
    <property type="entry name" value="Helicase_SF3_ssDNA/RNA_vir"/>
</dbReference>
<dbReference type="InterPro" id="IPR014759">
    <property type="entry name" value="Helicase_SF3_ssRNA_vir"/>
</dbReference>
<dbReference type="InterPro" id="IPR027417">
    <property type="entry name" value="P-loop_NTPase"/>
</dbReference>
<dbReference type="InterPro" id="IPR038765">
    <property type="entry name" value="Papain-like_cys_pep_sf"/>
</dbReference>
<dbReference type="InterPro" id="IPR044067">
    <property type="entry name" value="PCV_3C_PRO"/>
</dbReference>
<dbReference type="InterPro" id="IPR008739">
    <property type="entry name" value="Peptidase_C28"/>
</dbReference>
<dbReference type="InterPro" id="IPR000199">
    <property type="entry name" value="Peptidase_C3A/C3B_picornavir"/>
</dbReference>
<dbReference type="InterPro" id="IPR009003">
    <property type="entry name" value="Peptidase_S1_PA"/>
</dbReference>
<dbReference type="InterPro" id="IPR043504">
    <property type="entry name" value="Peptidase_S1_PA_chymotrypsin"/>
</dbReference>
<dbReference type="InterPro" id="IPR001676">
    <property type="entry name" value="Picornavirus_capsid"/>
</dbReference>
<dbReference type="InterPro" id="IPR043128">
    <property type="entry name" value="Rev_trsase/Diguanyl_cyclase"/>
</dbReference>
<dbReference type="InterPro" id="IPR033703">
    <property type="entry name" value="Rhv-like"/>
</dbReference>
<dbReference type="InterPro" id="IPR001205">
    <property type="entry name" value="RNA-dir_pol_C"/>
</dbReference>
<dbReference type="InterPro" id="IPR007094">
    <property type="entry name" value="RNA-dir_pol_PSvirus"/>
</dbReference>
<dbReference type="InterPro" id="IPR029053">
    <property type="entry name" value="Viral_coat"/>
</dbReference>
<dbReference type="Pfam" id="PF05408">
    <property type="entry name" value="Peptidase_C28"/>
    <property type="match status" value="1"/>
</dbReference>
<dbReference type="Pfam" id="PF00548">
    <property type="entry name" value="Peptidase_C3"/>
    <property type="match status" value="1"/>
</dbReference>
<dbReference type="Pfam" id="PF00680">
    <property type="entry name" value="RdRP_1"/>
    <property type="match status" value="1"/>
</dbReference>
<dbReference type="Pfam" id="PF00073">
    <property type="entry name" value="Rhv"/>
    <property type="match status" value="2"/>
</dbReference>
<dbReference type="Pfam" id="PF22663">
    <property type="entry name" value="Rhv_5"/>
    <property type="match status" value="1"/>
</dbReference>
<dbReference type="Pfam" id="PF00910">
    <property type="entry name" value="RNA_helicase"/>
    <property type="match status" value="1"/>
</dbReference>
<dbReference type="Pfam" id="PF08935">
    <property type="entry name" value="VP4_2"/>
    <property type="match status" value="1"/>
</dbReference>
<dbReference type="PRINTS" id="PR00918">
    <property type="entry name" value="CALICVIRUSNS"/>
</dbReference>
<dbReference type="PRINTS" id="PR01542">
    <property type="entry name" value="FMDVP1COAT"/>
</dbReference>
<dbReference type="SUPFAM" id="SSF54001">
    <property type="entry name" value="Cysteine proteinases"/>
    <property type="match status" value="1"/>
</dbReference>
<dbReference type="SUPFAM" id="SSF56672">
    <property type="entry name" value="DNA/RNA polymerases"/>
    <property type="match status" value="1"/>
</dbReference>
<dbReference type="SUPFAM" id="SSF52540">
    <property type="entry name" value="P-loop containing nucleoside triphosphate hydrolases"/>
    <property type="match status" value="1"/>
</dbReference>
<dbReference type="SUPFAM" id="SSF88633">
    <property type="entry name" value="Positive stranded ssRNA viruses"/>
    <property type="match status" value="2"/>
</dbReference>
<dbReference type="SUPFAM" id="SSF50494">
    <property type="entry name" value="Trypsin-like serine proteases"/>
    <property type="match status" value="1"/>
</dbReference>
<dbReference type="PROSITE" id="PS51887">
    <property type="entry name" value="APHTHOVIRUS_LPRO"/>
    <property type="match status" value="1"/>
</dbReference>
<dbReference type="PROSITE" id="PS51874">
    <property type="entry name" value="PCV_3C_PRO"/>
    <property type="match status" value="1"/>
</dbReference>
<dbReference type="PROSITE" id="PS50507">
    <property type="entry name" value="RDRP_SSRNA_POS"/>
    <property type="match status" value="1"/>
</dbReference>
<dbReference type="PROSITE" id="PS51218">
    <property type="entry name" value="SF3_HELICASE_2"/>
    <property type="match status" value="1"/>
</dbReference>
<organism>
    <name type="scientific">Foot-and-mouth disease virus (isolate Bovine/Brazil/A24Cruzeiro/1955 serotype A)</name>
    <name type="common">FMDV</name>
    <dbReference type="NCBI Taxonomy" id="12115"/>
    <lineage>
        <taxon>Viruses</taxon>
        <taxon>Riboviria</taxon>
        <taxon>Orthornavirae</taxon>
        <taxon>Pisuviricota</taxon>
        <taxon>Pisoniviricetes</taxon>
        <taxon>Picornavirales</taxon>
        <taxon>Picornaviridae</taxon>
        <taxon>Caphthovirinae</taxon>
        <taxon>Aphthovirus</taxon>
        <taxon>Foot-and-mouth disease virus</taxon>
    </lineage>
</organism>
<evidence type="ECO:0000250" key="1"/>
<evidence type="ECO:0000250" key="2">
    <source>
        <dbReference type="UniProtKB" id="A2I7M2"/>
    </source>
</evidence>
<evidence type="ECO:0000250" key="3">
    <source>
        <dbReference type="UniProtKB" id="P03300"/>
    </source>
</evidence>
<evidence type="ECO:0000250" key="4">
    <source>
        <dbReference type="UniProtKB" id="P03305"/>
    </source>
</evidence>
<evidence type="ECO:0000250" key="5">
    <source>
        <dbReference type="UniProtKB" id="P03306"/>
    </source>
</evidence>
<evidence type="ECO:0000250" key="6">
    <source>
        <dbReference type="UniProtKB" id="P03308"/>
    </source>
</evidence>
<evidence type="ECO:0000250" key="7">
    <source>
        <dbReference type="UniProtKB" id="P03311"/>
    </source>
</evidence>
<evidence type="ECO:0000250" key="8">
    <source>
        <dbReference type="UniProtKB" id="P12296"/>
    </source>
</evidence>
<evidence type="ECO:0000255" key="9"/>
<evidence type="ECO:0000255" key="10">
    <source>
        <dbReference type="PROSITE-ProRule" id="PRU00539"/>
    </source>
</evidence>
<evidence type="ECO:0000255" key="11">
    <source>
        <dbReference type="PROSITE-ProRule" id="PRU00551"/>
    </source>
</evidence>
<evidence type="ECO:0000255" key="12">
    <source>
        <dbReference type="PROSITE-ProRule" id="PRU01222"/>
    </source>
</evidence>
<evidence type="ECO:0000256" key="13">
    <source>
        <dbReference type="SAM" id="MobiDB-lite"/>
    </source>
</evidence>
<evidence type="ECO:0000305" key="14"/>
<sequence>MNTTDCFIALVHAIREIRAFFLPRATGRMEFTLHNGERKVFYSRPNNHDNCWLNTILQLFRYVGEPFFDWVYDSPENLTLEAIEQLEELTGLELHEGGPPALVIWNIKHLLHTGIGTASRPSEVCMVDGTNMCLADFHAGIFLKGQEHAVFACVTSNGWYAIDDEDFYPWTPDPSDVLVFVPYDQEPLNGEWKTKVQQKLKGAGQSSPATGSQNQSGNTGSIINNYYMQQYQNSMDTQLGDNAISGGSNEGSTDTTSTHTTNTQNNDWFSKLASSAFTGLFGALLADKKTEETTLLEDRILTTRNGHTTSTTQSSVGVTHGYSTEEDHVAGPNTSGLETRVVQAERFYKKYLFDWTTDKAFGHLEKLELPSDHHGVFGHLVDSYAYMRNGWDVEVSAVGNQFNGGCLLVAMVPEWKEFDTREKYQLTLFPHQFISPRTNMTAHITVPYLGVNRYDQYKKHKPWTLVVMVVSPLTVNNTSAAQIKVYANIAPTYVHVAGELPSKEGIFPVACADGYGGLVTTDPKTADPAYGKVYNPPRTNYPGRFTNLLDVAEACPTFLCFDDGKPYVTTRTDDTRLLAKFDLSLAAKHMSNTYLSGIAQYYTQYSGTINLHFMFTGSTDSKARYMVAYIPPGVETPPDTPERAAHCIHAEWDTGLNSKFTFSIPYVSAADYAYTASDTAETINVQGWVCIYQITHGKAENDTLVVSVSAGKDFELRLPIDPRQQTTATGESADPVTTTVENYGGETQIQRRHHTDIGFIMDRFVKIQSLSPTHVIDLMQTHQHGLVGALLRAATYYFSDLEIVVRHEGNLTWVPNGAPESALLNTSNPTAYNKAPFTRLALPYTAPHRVLATVYNGTSKYAVGGSGRRGDMGSLAARVVKQLPASFNYGAIKADAIHELLVRMKRAELYCPRPLLAIEVSSQDRHKQKIIAPAKQLLNFDLLKLAGDVESNPGPFFFSDVRSNFSKLVDTINQMQEDMSTKHGPDFNRLVSAFEELATGVKAIRTGLDEAKPWYKLIKLLSRLSCMAAVAARSKDPVLVAIMLADTGLEILDSTFVVKKISDSLSSLFHVPAPVFSFGAPILLAGLVKVASSFFRSTPEDLERAEKQLKARDINDIFAILKNGEWLVKLILAIRDWIKAWIASEEKFVTTTDLVPGILEKQRDLNDPSKYKEAKEWLDNARQACLKSGNVHIANLCKVVAPAPSRSRPEPVVVCLRGKSGQGKSFLANVLAQAISTHFTGRTDSVWYCPPDPDHFDGYNQQTVVVMDDLGQNPDGKDFKYFAQMVSTTGFIPPMASLEDKGKPFNSKVIIATTNLYSGFTPRTMVCPDALNRRFHFDIDVSAKDGYKINNKLDIIKALEDTHTNPVAMFQYDCALLNGMAVEMKRMQQDMFKPQPPLQNVYQLVQEVIERVELHEKVSSHPIFKQISIPSQKSVLYFLIEKGQHEAAIEFFEGMVHDSIKEELRPLIQQTSFVKRAFKRLKENFEIVALCLTLLANIVIMIRETRKRQKMVDDAVSEYIERANITTDDKTLDEAEKNPLETSGASTVGFRERPLPGQKARNDENSEPAQPAEEQPQAEGPYAGPLERQKPLKVRAKLPQQEGPYAGPMERQKPLKVKAKAPVVKEGPYEGPVKKPVALKVKAKNLIVTESGAPPTDLQKLVMGNTKPVELILDGKTVAICCATGVFGTAYLVPRHLFAEKYDKIMLDGRAMTDSDYRVFEFEIKVKGQDMLSDAALMVLHRGNRVRDITKHFRDTARMKKGTPVVGVINNADVGRLIFSGEALTYKDIVVCMDGDTMPGLFAYKAATKAGYCGGAVLAKDGADTFIVGTHSAGGNGVGYCSCVSRSMLLKMKAHVDPEPHHEGLIVDTRDVEERVHVMRKTKLAPTVAHGVFNPEFGPAALSNKDPRLNDGVVLDEVIFSKHKGDTKMSEEDKALFRRCAADYASRLHSVLGTANAPLSIYEAIKGVDGLDAMEPDTAPGLPWALQGKRRGALIDFENGTVGPEVEAALKLMEKREYKFACQTFLKDEIRPMEKVRAGKTRIVDVLPVEHILYTRMMIGRFCAQMHSNNGPQIGSAVGCNPDVDWQRFGTHFAQYRNVWDVDYSAFDANHCSDAMNIMFEEVFRTEFGFHPNAEWILKTLVNTEHAYENKRITVEGGMPSGCSATSIINTILNNIYVLYALRRHYEGVELDTYTMISYGDDIVVASDYDLDFEALKPHFKSLGQTITPADKSDKGFVLGHSITDVTFLKRHFHMDYGTGFYKPVMASKTLEAILSFARRGTIQEKLISVAGLAVHSGPDEYRRLFEPFQGLFEIPSYRSLYLRWVNAVCGDA</sequence>
<protein>
    <recommendedName>
        <fullName>Genome polyprotein</fullName>
    </recommendedName>
    <component>
        <recommendedName>
            <fullName>Leader protease</fullName>
            <shortName>Lpro</shortName>
            <ecNumber evidence="4">3.4.22.46</ecNumber>
        </recommendedName>
    </component>
    <component>
        <recommendedName>
            <fullName>Capsid protein VP0</fullName>
        </recommendedName>
        <alternativeName>
            <fullName>VP4-VP2</fullName>
        </alternativeName>
    </component>
    <component>
        <recommendedName>
            <fullName>Capsid protein VP4</fullName>
        </recommendedName>
        <alternativeName>
            <fullName>P1A</fullName>
        </alternativeName>
        <alternativeName>
            <fullName>Virion protein 4</fullName>
        </alternativeName>
    </component>
    <component>
        <recommendedName>
            <fullName>Capsid protein VP2</fullName>
        </recommendedName>
        <alternativeName>
            <fullName>P1B</fullName>
        </alternativeName>
        <alternativeName>
            <fullName>Virion protein 2</fullName>
        </alternativeName>
    </component>
    <component>
        <recommendedName>
            <fullName>Capsid protein VP3</fullName>
        </recommendedName>
        <alternativeName>
            <fullName>P1C</fullName>
        </alternativeName>
        <alternativeName>
            <fullName>Virion protein 3</fullName>
        </alternativeName>
    </component>
    <component>
        <recommendedName>
            <fullName>Capsid protein VP1</fullName>
        </recommendedName>
        <alternativeName>
            <fullName>P1D</fullName>
        </alternativeName>
        <alternativeName>
            <fullName>Virion protein 1</fullName>
        </alternativeName>
    </component>
    <component>
        <recommendedName>
            <fullName>Protein 2A</fullName>
            <shortName>P2A</shortName>
        </recommendedName>
        <alternativeName>
            <fullName>P52</fullName>
        </alternativeName>
    </component>
    <component>
        <recommendedName>
            <fullName>Protein 2B</fullName>
            <shortName>P2B</shortName>
        </recommendedName>
    </component>
    <component>
        <recommendedName>
            <fullName>Protein 2C</fullName>
            <shortName>P2C</shortName>
            <ecNumber evidence="4">3.6.1.15</ecNumber>
        </recommendedName>
    </component>
    <component>
        <recommendedName>
            <fullName>Protein 3A</fullName>
            <shortName>P3A</shortName>
        </recommendedName>
    </component>
    <component>
        <recommendedName>
            <fullName>Protein 3B-1</fullName>
            <shortName>P3B-1</shortName>
        </recommendedName>
        <alternativeName>
            <fullName>Genome-linked protein VPg1</fullName>
        </alternativeName>
    </component>
    <component>
        <recommendedName>
            <fullName>Protein 3B-2</fullName>
            <shortName>P3B-2</shortName>
        </recommendedName>
        <alternativeName>
            <fullName>Genome-linked protein VPg2</fullName>
        </alternativeName>
    </component>
    <component>
        <recommendedName>
            <fullName>Protein 3B-3</fullName>
            <shortName>P3B-3</shortName>
        </recommendedName>
        <alternativeName>
            <fullName>Genome-linked protein VPg3</fullName>
        </alternativeName>
    </component>
    <component>
        <recommendedName>
            <fullName>Protease 3C</fullName>
            <ecNumber>3.4.22.28</ecNumber>
        </recommendedName>
        <alternativeName>
            <fullName>Picornain 3C</fullName>
            <shortName>P3C</shortName>
        </alternativeName>
        <alternativeName>
            <fullName>Protease P20B</fullName>
        </alternativeName>
    </component>
    <component>
        <recommendedName>
            <fullName>RNA-directed RNA polymerase 3D-POL</fullName>
            <shortName>P3D-POL</shortName>
            <ecNumber evidence="4">2.7.7.48</ecNumber>
        </recommendedName>
        <alternativeName>
            <fullName>P56A</fullName>
        </alternativeName>
    </component>
</protein>
<reference key="1">
    <citation type="submission" date="1999-12" db="EMBL/GenBank/DDBJ databases">
        <title>Nucleotide sequence of foot-and-mouth disease virus A24/Cruzeiro/Brazil/55 from the poly(C) tract to 2B.</title>
        <authorList>
            <person name="Abrams C.C."/>
        </authorList>
    </citation>
    <scope>NUCLEOTIDE SEQUENCE [GENOMIC RNA]</scope>
</reference>
<reference key="2">
    <citation type="submission" date="1999-12" db="EMBL/GenBank/DDBJ databases">
        <title>Phylogenetic comparison of the capsid-coding region of all seven foot-and-mouth disease virus serotypes.</title>
        <authorList>
            <person name="Knowles N.J."/>
            <person name="Samuel A.R."/>
            <person name="Aktas S."/>
            <person name="Rowe C.A."/>
            <person name="Abrams C.C."/>
            <person name="Newman J.W.I."/>
            <person name="King A.M.Q."/>
        </authorList>
    </citation>
    <scope>NUCLEOTIDE SEQUENCE [GENOMIC RNA]</scope>
</reference>
<reference key="3">
    <citation type="journal article" date="2005" name="J. Virol.">
        <title>Comparative genomics of foot-and-mouth disease virus.</title>
        <authorList>
            <person name="Carrillo C."/>
            <person name="Tulman E.R."/>
            <person name="Delhon G."/>
            <person name="Lu Z."/>
            <person name="Carreno A."/>
            <person name="Vagnozzi A."/>
            <person name="Kutish G.F."/>
            <person name="Rock D.L."/>
        </authorList>
    </citation>
    <scope>NUCLEOTIDE SEQUENCE [GENOMIC RNA]</scope>
</reference>
<reference key="4">
    <citation type="journal article" date="2012" name="Vet. Microbiol.">
        <title>Molecular epidemiology of foot-and-mouth disease virus type A in South America.</title>
        <authorList>
            <person name="Malirat V."/>
            <person name="Bergmann I.E."/>
            <person name="de Mendonca Campos R."/>
            <person name="Conde F."/>
            <person name="Quiroga J.L."/>
            <person name="Villamil M."/>
            <person name="Salgado G."/>
            <person name="Ortiz S."/>
        </authorList>
    </citation>
    <scope>NUCLEOTIDE SEQUENCE [GENOMIC RNA] OF 726-938</scope>
</reference>
<reference key="5">
    <citation type="journal article" date="1982" name="Nucleic Acids Res.">
        <title>Comparison of the amino acid sequence of the major immunogen from three serotypes of foot and mouth disease virus.</title>
        <authorList>
            <person name="Makoff A.J."/>
            <person name="Paynter C.A."/>
            <person name="Rowlands D.J."/>
            <person name="Boothroyd J.C."/>
        </authorList>
    </citation>
    <scope>NUCLEOTIDE SEQUENCE [GENOMIC RNA] OF 737-952</scope>
</reference>
<proteinExistence type="evidence at protein level"/>